<keyword id="KW-1185">Reference proteome</keyword>
<feature type="chain" id="PRO_0000385392" description="Uncharacterized protein 75">
    <location>
        <begin position="1"/>
        <end position="178"/>
    </location>
</feature>
<reference key="1">
    <citation type="journal article" date="2000" name="Virology">
        <title>A novel lipothrixvirus, SIFV, of the extremely thermophilic crenarchaeon Sulfolobus.</title>
        <authorList>
            <person name="Arnold H.P."/>
            <person name="Zillig W."/>
            <person name="Ziese U."/>
            <person name="Holz I."/>
            <person name="Crosby M."/>
            <person name="Utterback T."/>
            <person name="Weidmann J.F."/>
            <person name="Umayam L.A."/>
            <person name="Teffera K."/>
            <person name="Kristjanson J.K."/>
            <person name="Klenk H.P."/>
            <person name="Nelson K.E."/>
            <person name="Fraser C.M."/>
        </authorList>
    </citation>
    <scope>NUCLEOTIDE SEQUENCE [GENOMIC DNA]</scope>
</reference>
<accession>A8JYX6</accession>
<proteinExistence type="predicted"/>
<dbReference type="EMBL" id="AF440571">
    <property type="protein sequence ID" value="ABW20491.1"/>
    <property type="molecule type" value="Genomic_DNA"/>
</dbReference>
<dbReference type="RefSeq" id="YP_001504371.1">
    <property type="nucleotide sequence ID" value="NC_003214.2"/>
</dbReference>
<dbReference type="GeneID" id="5666714"/>
<dbReference type="KEGG" id="vg:5666714"/>
<dbReference type="Proteomes" id="UP000007017">
    <property type="component" value="Segment"/>
</dbReference>
<protein>
    <recommendedName>
        <fullName>Uncharacterized protein 75</fullName>
    </recommendedName>
</protein>
<name>Y075_SIFVH</name>
<organismHost>
    <name type="scientific">Saccharolobus islandicus</name>
    <name type="common">Sulfolobus islandicus</name>
    <dbReference type="NCBI Taxonomy" id="43080"/>
</organismHost>
<sequence length="178" mass="21151">MPSLLSLLRHGIHSSIFDIHFSPDRFKFLCPSFGLYLFITLRKSSFEIDYNNGLIYIEYNVPEPLSNKYLLTYDISCAGNKCFKHAEIFYNLYSDLFKQYVYPTLSSIKASKIHVKECSKYLIESNLVKLVSYPYLDFFVHDVLHFRVVTSMFNEFKKFDCAYPRRYITRFVKYAKKI</sequence>
<organism>
    <name type="scientific">Sulfolobus islandicus filamentous virus (isolate Iceland/Hveragerdi)</name>
    <name type="common">SIFV</name>
    <dbReference type="NCBI Taxonomy" id="654908"/>
    <lineage>
        <taxon>Viruses</taxon>
        <taxon>Adnaviria</taxon>
        <taxon>Zilligvirae</taxon>
        <taxon>Taleaviricota</taxon>
        <taxon>Tokiviricetes</taxon>
        <taxon>Ligamenvirales</taxon>
        <taxon>Lipothrixviridae</taxon>
        <taxon>Betalipothrixvirus</taxon>
        <taxon>Sulfolobus islandicus filamentous virus</taxon>
    </lineage>
</organism>
<gene>
    <name type="primary">SIFV0075</name>
</gene>